<comment type="function">
    <text evidence="1">Cell wall formation. Catalyzes the addition of glutamate to the nucleotide precursor UDP-N-acetylmuramoyl-L-alanine (UMA).</text>
</comment>
<comment type="catalytic activity">
    <reaction evidence="1">
        <text>UDP-N-acetyl-alpha-D-muramoyl-L-alanine + D-glutamate + ATP = UDP-N-acetyl-alpha-D-muramoyl-L-alanyl-D-glutamate + ADP + phosphate + H(+)</text>
        <dbReference type="Rhea" id="RHEA:16429"/>
        <dbReference type="ChEBI" id="CHEBI:15378"/>
        <dbReference type="ChEBI" id="CHEBI:29986"/>
        <dbReference type="ChEBI" id="CHEBI:30616"/>
        <dbReference type="ChEBI" id="CHEBI:43474"/>
        <dbReference type="ChEBI" id="CHEBI:83898"/>
        <dbReference type="ChEBI" id="CHEBI:83900"/>
        <dbReference type="ChEBI" id="CHEBI:456216"/>
        <dbReference type="EC" id="6.3.2.9"/>
    </reaction>
</comment>
<comment type="pathway">
    <text evidence="1">Cell wall biogenesis; peptidoglycan biosynthesis.</text>
</comment>
<comment type="subcellular location">
    <subcellularLocation>
        <location evidence="1">Cytoplasm</location>
    </subcellularLocation>
</comment>
<comment type="similarity">
    <text evidence="1">Belongs to the MurCDEF family.</text>
</comment>
<keyword id="KW-0067">ATP-binding</keyword>
<keyword id="KW-0131">Cell cycle</keyword>
<keyword id="KW-0132">Cell division</keyword>
<keyword id="KW-0133">Cell shape</keyword>
<keyword id="KW-0961">Cell wall biogenesis/degradation</keyword>
<keyword id="KW-0963">Cytoplasm</keyword>
<keyword id="KW-0436">Ligase</keyword>
<keyword id="KW-0547">Nucleotide-binding</keyword>
<keyword id="KW-0573">Peptidoglycan synthesis</keyword>
<proteinExistence type="inferred from homology"/>
<name>MURD_BUCA5</name>
<dbReference type="EC" id="6.3.2.9" evidence="1"/>
<dbReference type="EMBL" id="CP001161">
    <property type="protein sequence ID" value="ACL30587.1"/>
    <property type="molecule type" value="Genomic_DNA"/>
</dbReference>
<dbReference type="RefSeq" id="WP_009874175.1">
    <property type="nucleotide sequence ID" value="NC_011833.1"/>
</dbReference>
<dbReference type="SMR" id="B8D916"/>
<dbReference type="KEGG" id="bap:BUAP5A_214"/>
<dbReference type="HOGENOM" id="CLU_032540_1_0_6"/>
<dbReference type="OrthoDB" id="9809796at2"/>
<dbReference type="UniPathway" id="UPA00219"/>
<dbReference type="Proteomes" id="UP000006904">
    <property type="component" value="Chromosome"/>
</dbReference>
<dbReference type="GO" id="GO:0005737">
    <property type="term" value="C:cytoplasm"/>
    <property type="evidence" value="ECO:0007669"/>
    <property type="project" value="UniProtKB-SubCell"/>
</dbReference>
<dbReference type="GO" id="GO:0005524">
    <property type="term" value="F:ATP binding"/>
    <property type="evidence" value="ECO:0007669"/>
    <property type="project" value="UniProtKB-UniRule"/>
</dbReference>
<dbReference type="GO" id="GO:0008764">
    <property type="term" value="F:UDP-N-acetylmuramoylalanine-D-glutamate ligase activity"/>
    <property type="evidence" value="ECO:0007669"/>
    <property type="project" value="UniProtKB-UniRule"/>
</dbReference>
<dbReference type="GO" id="GO:0051301">
    <property type="term" value="P:cell division"/>
    <property type="evidence" value="ECO:0007669"/>
    <property type="project" value="UniProtKB-KW"/>
</dbReference>
<dbReference type="GO" id="GO:0071555">
    <property type="term" value="P:cell wall organization"/>
    <property type="evidence" value="ECO:0007669"/>
    <property type="project" value="UniProtKB-KW"/>
</dbReference>
<dbReference type="GO" id="GO:0009252">
    <property type="term" value="P:peptidoglycan biosynthetic process"/>
    <property type="evidence" value="ECO:0007669"/>
    <property type="project" value="UniProtKB-UniRule"/>
</dbReference>
<dbReference type="GO" id="GO:0008360">
    <property type="term" value="P:regulation of cell shape"/>
    <property type="evidence" value="ECO:0007669"/>
    <property type="project" value="UniProtKB-KW"/>
</dbReference>
<dbReference type="Gene3D" id="3.90.190.20">
    <property type="entry name" value="Mur ligase, C-terminal domain"/>
    <property type="match status" value="1"/>
</dbReference>
<dbReference type="Gene3D" id="3.40.1190.10">
    <property type="entry name" value="Mur-like, catalytic domain"/>
    <property type="match status" value="1"/>
</dbReference>
<dbReference type="Gene3D" id="3.40.50.720">
    <property type="entry name" value="NAD(P)-binding Rossmann-like Domain"/>
    <property type="match status" value="1"/>
</dbReference>
<dbReference type="HAMAP" id="MF_00639">
    <property type="entry name" value="MurD"/>
    <property type="match status" value="1"/>
</dbReference>
<dbReference type="InterPro" id="IPR036565">
    <property type="entry name" value="Mur-like_cat_sf"/>
</dbReference>
<dbReference type="InterPro" id="IPR004101">
    <property type="entry name" value="Mur_ligase_C"/>
</dbReference>
<dbReference type="InterPro" id="IPR036615">
    <property type="entry name" value="Mur_ligase_C_dom_sf"/>
</dbReference>
<dbReference type="InterPro" id="IPR013221">
    <property type="entry name" value="Mur_ligase_cen"/>
</dbReference>
<dbReference type="InterPro" id="IPR005762">
    <property type="entry name" value="MurD"/>
</dbReference>
<dbReference type="NCBIfam" id="TIGR01087">
    <property type="entry name" value="murD"/>
    <property type="match status" value="1"/>
</dbReference>
<dbReference type="PANTHER" id="PTHR43692">
    <property type="entry name" value="UDP-N-ACETYLMURAMOYLALANINE--D-GLUTAMATE LIGASE"/>
    <property type="match status" value="1"/>
</dbReference>
<dbReference type="PANTHER" id="PTHR43692:SF1">
    <property type="entry name" value="UDP-N-ACETYLMURAMOYLALANINE--D-GLUTAMATE LIGASE"/>
    <property type="match status" value="1"/>
</dbReference>
<dbReference type="Pfam" id="PF02875">
    <property type="entry name" value="Mur_ligase_C"/>
    <property type="match status" value="1"/>
</dbReference>
<dbReference type="Pfam" id="PF08245">
    <property type="entry name" value="Mur_ligase_M"/>
    <property type="match status" value="1"/>
</dbReference>
<dbReference type="Pfam" id="PF21799">
    <property type="entry name" value="MurD-like_N"/>
    <property type="match status" value="1"/>
</dbReference>
<dbReference type="SUPFAM" id="SSF51984">
    <property type="entry name" value="MurCD N-terminal domain"/>
    <property type="match status" value="1"/>
</dbReference>
<dbReference type="SUPFAM" id="SSF53623">
    <property type="entry name" value="MurD-like peptide ligases, catalytic domain"/>
    <property type="match status" value="1"/>
</dbReference>
<dbReference type="SUPFAM" id="SSF53244">
    <property type="entry name" value="MurD-like peptide ligases, peptide-binding domain"/>
    <property type="match status" value="1"/>
</dbReference>
<protein>
    <recommendedName>
        <fullName evidence="1">UDP-N-acetylmuramoylalanine--D-glutamate ligase</fullName>
        <ecNumber evidence="1">6.3.2.9</ecNumber>
    </recommendedName>
    <alternativeName>
        <fullName evidence="1">D-glutamic acid-adding enzyme</fullName>
    </alternativeName>
    <alternativeName>
        <fullName evidence="1">UDP-N-acetylmuramoyl-L-alanyl-D-glutamate synthetase</fullName>
    </alternativeName>
</protein>
<organism>
    <name type="scientific">Buchnera aphidicola subsp. Acyrthosiphon pisum (strain 5A)</name>
    <dbReference type="NCBI Taxonomy" id="563178"/>
    <lineage>
        <taxon>Bacteria</taxon>
        <taxon>Pseudomonadati</taxon>
        <taxon>Pseudomonadota</taxon>
        <taxon>Gammaproteobacteria</taxon>
        <taxon>Enterobacterales</taxon>
        <taxon>Erwiniaceae</taxon>
        <taxon>Buchnera</taxon>
    </lineage>
</organism>
<sequence>MSYNYFGKKILILGMGLTGISCINFFLKKGIKPKIIDESKHPSNFIKIPQNIEYSLGSLDHQWILESDLIVISPGISSFKPILIKARLLGIEIISDIELFSREVTCPIISITGTNGKSTVATMIEKIAKKSGYKAFLGGNIGVPVLEILDKEADLYIIELSSFQLENTFNLKSKIAVILNISEDHINRYPNGFQQYKNTKLSVYNQAEICIINSNDKIEKSLIHSKNKKWISFGTNRSDYRICSKSNDPILFFKNKKILNTSEILLYGYHNYNNILVSLAISDAMQFPRNDAINVLKSFSNLPHRFQIIKNEKGVRWINDSKSTNVNSTQVALNSIKTTGTIRLLLGGDSKSANFNILKNIFRTLKIKIYCFGRDGIKLSKICEKKSIYVENLKKAVILISKQVKSGDTVLLSPGCSSLDQFSNFEERGNLFIKLIKEIT</sequence>
<feature type="chain" id="PRO_1000147396" description="UDP-N-acetylmuramoylalanine--D-glutamate ligase">
    <location>
        <begin position="1"/>
        <end position="440"/>
    </location>
</feature>
<feature type="binding site" evidence="1">
    <location>
        <begin position="113"/>
        <end position="119"/>
    </location>
    <ligand>
        <name>ATP</name>
        <dbReference type="ChEBI" id="CHEBI:30616"/>
    </ligand>
</feature>
<evidence type="ECO:0000255" key="1">
    <source>
        <dbReference type="HAMAP-Rule" id="MF_00639"/>
    </source>
</evidence>
<accession>B8D916</accession>
<gene>
    <name evidence="1" type="primary">murD</name>
    <name type="ordered locus">BUAP5A_214</name>
</gene>
<reference key="1">
    <citation type="journal article" date="2009" name="Science">
        <title>The dynamics and time scale of ongoing genomic erosion in symbiotic bacteria.</title>
        <authorList>
            <person name="Moran N.A."/>
            <person name="McLaughlin H.J."/>
            <person name="Sorek R."/>
        </authorList>
    </citation>
    <scope>NUCLEOTIDE SEQUENCE [LARGE SCALE GENOMIC DNA]</scope>
    <source>
        <strain>5A</strain>
    </source>
</reference>